<feature type="chain" id="PRO_1000135899" description="2,3-bisphosphoglycerate-independent phosphoglycerate mutase">
    <location>
        <begin position="1"/>
        <end position="509"/>
    </location>
</feature>
<feature type="active site" description="Phosphoserine intermediate" evidence="1">
    <location>
        <position position="63"/>
    </location>
</feature>
<feature type="binding site" evidence="1">
    <location>
        <position position="13"/>
    </location>
    <ligand>
        <name>Mn(2+)</name>
        <dbReference type="ChEBI" id="CHEBI:29035"/>
        <label>2</label>
    </ligand>
</feature>
<feature type="binding site" evidence="1">
    <location>
        <position position="63"/>
    </location>
    <ligand>
        <name>Mn(2+)</name>
        <dbReference type="ChEBI" id="CHEBI:29035"/>
        <label>2</label>
    </ligand>
</feature>
<feature type="binding site" evidence="1">
    <location>
        <position position="124"/>
    </location>
    <ligand>
        <name>substrate</name>
    </ligand>
</feature>
<feature type="binding site" evidence="1">
    <location>
        <begin position="154"/>
        <end position="155"/>
    </location>
    <ligand>
        <name>substrate</name>
    </ligand>
</feature>
<feature type="binding site" evidence="1">
    <location>
        <position position="186"/>
    </location>
    <ligand>
        <name>substrate</name>
    </ligand>
</feature>
<feature type="binding site" evidence="1">
    <location>
        <position position="192"/>
    </location>
    <ligand>
        <name>substrate</name>
    </ligand>
</feature>
<feature type="binding site" evidence="1">
    <location>
        <begin position="261"/>
        <end position="264"/>
    </location>
    <ligand>
        <name>substrate</name>
    </ligand>
</feature>
<feature type="binding site" evidence="1">
    <location>
        <position position="335"/>
    </location>
    <ligand>
        <name>substrate</name>
    </ligand>
</feature>
<feature type="binding site" evidence="1">
    <location>
        <position position="400"/>
    </location>
    <ligand>
        <name>Mn(2+)</name>
        <dbReference type="ChEBI" id="CHEBI:29035"/>
        <label>1</label>
    </ligand>
</feature>
<feature type="binding site" evidence="1">
    <location>
        <position position="404"/>
    </location>
    <ligand>
        <name>Mn(2+)</name>
        <dbReference type="ChEBI" id="CHEBI:29035"/>
        <label>1</label>
    </ligand>
</feature>
<feature type="binding site" evidence="1">
    <location>
        <position position="441"/>
    </location>
    <ligand>
        <name>Mn(2+)</name>
        <dbReference type="ChEBI" id="CHEBI:29035"/>
        <label>2</label>
    </ligand>
</feature>
<feature type="binding site" evidence="1">
    <location>
        <position position="442"/>
    </location>
    <ligand>
        <name>Mn(2+)</name>
        <dbReference type="ChEBI" id="CHEBI:29035"/>
        <label>2</label>
    </ligand>
</feature>
<feature type="binding site" evidence="1">
    <location>
        <position position="459"/>
    </location>
    <ligand>
        <name>Mn(2+)</name>
        <dbReference type="ChEBI" id="CHEBI:29035"/>
        <label>1</label>
    </ligand>
</feature>
<protein>
    <recommendedName>
        <fullName evidence="1">2,3-bisphosphoglycerate-independent phosphoglycerate mutase</fullName>
        <shortName evidence="1">BPG-independent PGAM</shortName>
        <shortName evidence="1">Phosphoglyceromutase</shortName>
        <shortName evidence="1">iPGM</shortName>
        <ecNumber evidence="1">5.4.2.12</ecNumber>
    </recommendedName>
</protein>
<proteinExistence type="inferred from homology"/>
<sequence>MSPNTPLVLVILDGWGCGDRVEGNAIAQADTPNWNRYRSVWPRTVLKCSGEDVGLPPGQMGNSEVGHLNLGAGRIVYQDLTRITRAVRDGSFFENAVLRTSIEASRRNGHALHLMGLLSDGGVHSHISHLFALLELAGRLDQRSVYVHAFLDGRDVPPANALEYVEALEDKLKTLGYGAVASVIGRYYAMDRDRRWERTARAYRAMVYGEGLRASSARQAVEKGYERGETDEFIQPTVIVRDGRPVAQVRDGDALVFFNFRPDRARQITRSFTDAEFGGFERGPAPAFPDFVCLTQYDRTIVAPVAFGPQELTNTLGNVLSRHGLRQLRLAETEKYAHVTFFFNGGVEQRDPGEDRLLIPSPKVPTYDLKPEMSAREVTDAFLANIEKYDIIIMNYANPDMVGHTGDLSAAIKAVETVDECLGRVVEAVLARGGTVLVSGDHGNAEHMCDAEGCPLTAHTCNPVPLLIIGEAVAGRSLRPGSLQDVAPTILDLLGLPKPPEMTGTSLLS</sequence>
<organism>
    <name type="scientific">Desulforudis audaxviator (strain MP104C)</name>
    <dbReference type="NCBI Taxonomy" id="477974"/>
    <lineage>
        <taxon>Bacteria</taxon>
        <taxon>Bacillati</taxon>
        <taxon>Bacillota</taxon>
        <taxon>Clostridia</taxon>
        <taxon>Thermoanaerobacterales</taxon>
        <taxon>Candidatus Desulforudaceae</taxon>
        <taxon>Candidatus Desulforudis</taxon>
    </lineage>
</organism>
<accession>B1I0X9</accession>
<keyword id="KW-0324">Glycolysis</keyword>
<keyword id="KW-0413">Isomerase</keyword>
<keyword id="KW-0464">Manganese</keyword>
<keyword id="KW-0479">Metal-binding</keyword>
<keyword id="KW-1185">Reference proteome</keyword>
<dbReference type="EC" id="5.4.2.12" evidence="1"/>
<dbReference type="EMBL" id="CP000860">
    <property type="protein sequence ID" value="ACA58866.1"/>
    <property type="molecule type" value="Genomic_DNA"/>
</dbReference>
<dbReference type="RefSeq" id="WP_012301458.1">
    <property type="nucleotide sequence ID" value="NC_010424.1"/>
</dbReference>
<dbReference type="SMR" id="B1I0X9"/>
<dbReference type="STRING" id="477974.Daud_0305"/>
<dbReference type="KEGG" id="dau:Daud_0305"/>
<dbReference type="eggNOG" id="COG0696">
    <property type="taxonomic scope" value="Bacteria"/>
</dbReference>
<dbReference type="HOGENOM" id="CLU_026099_2_0_9"/>
<dbReference type="OrthoDB" id="9800863at2"/>
<dbReference type="UniPathway" id="UPA00109">
    <property type="reaction ID" value="UER00186"/>
</dbReference>
<dbReference type="Proteomes" id="UP000008544">
    <property type="component" value="Chromosome"/>
</dbReference>
<dbReference type="GO" id="GO:0005829">
    <property type="term" value="C:cytosol"/>
    <property type="evidence" value="ECO:0007669"/>
    <property type="project" value="TreeGrafter"/>
</dbReference>
<dbReference type="GO" id="GO:0030145">
    <property type="term" value="F:manganese ion binding"/>
    <property type="evidence" value="ECO:0007669"/>
    <property type="project" value="UniProtKB-UniRule"/>
</dbReference>
<dbReference type="GO" id="GO:0004619">
    <property type="term" value="F:phosphoglycerate mutase activity"/>
    <property type="evidence" value="ECO:0007669"/>
    <property type="project" value="UniProtKB-EC"/>
</dbReference>
<dbReference type="GO" id="GO:0006007">
    <property type="term" value="P:glucose catabolic process"/>
    <property type="evidence" value="ECO:0007669"/>
    <property type="project" value="InterPro"/>
</dbReference>
<dbReference type="GO" id="GO:0006096">
    <property type="term" value="P:glycolytic process"/>
    <property type="evidence" value="ECO:0007669"/>
    <property type="project" value="UniProtKB-UniRule"/>
</dbReference>
<dbReference type="CDD" id="cd16010">
    <property type="entry name" value="iPGM"/>
    <property type="match status" value="1"/>
</dbReference>
<dbReference type="FunFam" id="3.40.1450.10:FF:000001">
    <property type="entry name" value="2,3-bisphosphoglycerate-independent phosphoglycerate mutase"/>
    <property type="match status" value="1"/>
</dbReference>
<dbReference type="Gene3D" id="3.40.720.10">
    <property type="entry name" value="Alkaline Phosphatase, subunit A"/>
    <property type="match status" value="1"/>
</dbReference>
<dbReference type="Gene3D" id="3.40.1450.10">
    <property type="entry name" value="BPG-independent phosphoglycerate mutase, domain B"/>
    <property type="match status" value="1"/>
</dbReference>
<dbReference type="HAMAP" id="MF_01038">
    <property type="entry name" value="GpmI"/>
    <property type="match status" value="1"/>
</dbReference>
<dbReference type="InterPro" id="IPR017850">
    <property type="entry name" value="Alkaline_phosphatase_core_sf"/>
</dbReference>
<dbReference type="InterPro" id="IPR011258">
    <property type="entry name" value="BPG-indep_PGM_N"/>
</dbReference>
<dbReference type="InterPro" id="IPR006124">
    <property type="entry name" value="Metalloenzyme"/>
</dbReference>
<dbReference type="InterPro" id="IPR036646">
    <property type="entry name" value="PGAM_B_sf"/>
</dbReference>
<dbReference type="InterPro" id="IPR005995">
    <property type="entry name" value="Pgm_bpd_ind"/>
</dbReference>
<dbReference type="NCBIfam" id="TIGR01307">
    <property type="entry name" value="pgm_bpd_ind"/>
    <property type="match status" value="1"/>
</dbReference>
<dbReference type="PANTHER" id="PTHR31637">
    <property type="entry name" value="2,3-BISPHOSPHOGLYCERATE-INDEPENDENT PHOSPHOGLYCERATE MUTASE"/>
    <property type="match status" value="1"/>
</dbReference>
<dbReference type="PANTHER" id="PTHR31637:SF0">
    <property type="entry name" value="2,3-BISPHOSPHOGLYCERATE-INDEPENDENT PHOSPHOGLYCERATE MUTASE"/>
    <property type="match status" value="1"/>
</dbReference>
<dbReference type="Pfam" id="PF06415">
    <property type="entry name" value="iPGM_N"/>
    <property type="match status" value="1"/>
</dbReference>
<dbReference type="Pfam" id="PF01676">
    <property type="entry name" value="Metalloenzyme"/>
    <property type="match status" value="1"/>
</dbReference>
<dbReference type="PIRSF" id="PIRSF001492">
    <property type="entry name" value="IPGAM"/>
    <property type="match status" value="1"/>
</dbReference>
<dbReference type="SUPFAM" id="SSF64158">
    <property type="entry name" value="2,3-Bisphosphoglycerate-independent phosphoglycerate mutase, substrate-binding domain"/>
    <property type="match status" value="1"/>
</dbReference>
<dbReference type="SUPFAM" id="SSF53649">
    <property type="entry name" value="Alkaline phosphatase-like"/>
    <property type="match status" value="1"/>
</dbReference>
<gene>
    <name evidence="1" type="primary">gpmI</name>
    <name type="ordered locus">Daud_0305</name>
</gene>
<name>GPMI_DESAP</name>
<evidence type="ECO:0000255" key="1">
    <source>
        <dbReference type="HAMAP-Rule" id="MF_01038"/>
    </source>
</evidence>
<comment type="function">
    <text evidence="1">Catalyzes the interconversion of 2-phosphoglycerate and 3-phosphoglycerate.</text>
</comment>
<comment type="catalytic activity">
    <reaction evidence="1">
        <text>(2R)-2-phosphoglycerate = (2R)-3-phosphoglycerate</text>
        <dbReference type="Rhea" id="RHEA:15901"/>
        <dbReference type="ChEBI" id="CHEBI:58272"/>
        <dbReference type="ChEBI" id="CHEBI:58289"/>
        <dbReference type="EC" id="5.4.2.12"/>
    </reaction>
</comment>
<comment type="cofactor">
    <cofactor evidence="1">
        <name>Mn(2+)</name>
        <dbReference type="ChEBI" id="CHEBI:29035"/>
    </cofactor>
    <text evidence="1">Binds 2 manganese ions per subunit.</text>
</comment>
<comment type="pathway">
    <text evidence="1">Carbohydrate degradation; glycolysis; pyruvate from D-glyceraldehyde 3-phosphate: step 3/5.</text>
</comment>
<comment type="subunit">
    <text evidence="1">Monomer.</text>
</comment>
<comment type="similarity">
    <text evidence="1">Belongs to the BPG-independent phosphoglycerate mutase family.</text>
</comment>
<reference key="1">
    <citation type="submission" date="2007-10" db="EMBL/GenBank/DDBJ databases">
        <title>Complete sequence of chromosome of Desulforudis audaxviator MP104C.</title>
        <authorList>
            <person name="Copeland A."/>
            <person name="Lucas S."/>
            <person name="Lapidus A."/>
            <person name="Barry K."/>
            <person name="Glavina del Rio T."/>
            <person name="Dalin E."/>
            <person name="Tice H."/>
            <person name="Bruce D."/>
            <person name="Pitluck S."/>
            <person name="Lowry S.R."/>
            <person name="Larimer F."/>
            <person name="Land M.L."/>
            <person name="Hauser L."/>
            <person name="Kyrpides N."/>
            <person name="Ivanova N.N."/>
            <person name="Richardson P."/>
        </authorList>
    </citation>
    <scope>NUCLEOTIDE SEQUENCE [LARGE SCALE GENOMIC DNA]</scope>
    <source>
        <strain>MP104C</strain>
    </source>
</reference>